<accession>Q6HD81</accession>
<name>RL21_BACHK</name>
<reference key="1">
    <citation type="journal article" date="2006" name="J. Bacteriol.">
        <title>Pathogenomic sequence analysis of Bacillus cereus and Bacillus thuringiensis isolates closely related to Bacillus anthracis.</title>
        <authorList>
            <person name="Han C.S."/>
            <person name="Xie G."/>
            <person name="Challacombe J.F."/>
            <person name="Altherr M.R."/>
            <person name="Bhotika S.S."/>
            <person name="Bruce D."/>
            <person name="Campbell C.S."/>
            <person name="Campbell M.L."/>
            <person name="Chen J."/>
            <person name="Chertkov O."/>
            <person name="Cleland C."/>
            <person name="Dimitrijevic M."/>
            <person name="Doggett N.A."/>
            <person name="Fawcett J.J."/>
            <person name="Glavina T."/>
            <person name="Goodwin L.A."/>
            <person name="Hill K.K."/>
            <person name="Hitchcock P."/>
            <person name="Jackson P.J."/>
            <person name="Keim P."/>
            <person name="Kewalramani A.R."/>
            <person name="Longmire J."/>
            <person name="Lucas S."/>
            <person name="Malfatti S."/>
            <person name="McMurry K."/>
            <person name="Meincke L.J."/>
            <person name="Misra M."/>
            <person name="Moseman B.L."/>
            <person name="Mundt M."/>
            <person name="Munk A.C."/>
            <person name="Okinaka R.T."/>
            <person name="Parson-Quintana B."/>
            <person name="Reilly L.P."/>
            <person name="Richardson P."/>
            <person name="Robinson D.L."/>
            <person name="Rubin E."/>
            <person name="Saunders E."/>
            <person name="Tapia R."/>
            <person name="Tesmer J.G."/>
            <person name="Thayer N."/>
            <person name="Thompson L.S."/>
            <person name="Tice H."/>
            <person name="Ticknor L.O."/>
            <person name="Wills P.L."/>
            <person name="Brettin T.S."/>
            <person name="Gilna P."/>
        </authorList>
    </citation>
    <scope>NUCLEOTIDE SEQUENCE [LARGE SCALE GENOMIC DNA]</scope>
    <source>
        <strain>97-27</strain>
    </source>
</reference>
<sequence>MYAIIETGGKQIKVEAGQAIYIEKLDVEAGETVTFDKVLFVGGENVKVGSPVVEGATVTAKVEKQGRAKKIIVFKYKAKKNNRKKQGHRQPYTKLVVEAINA</sequence>
<gene>
    <name evidence="1" type="primary">rplU</name>
    <name type="ordered locus">BT9727_4178</name>
</gene>
<dbReference type="EMBL" id="AE017355">
    <property type="protein sequence ID" value="AAT63741.1"/>
    <property type="molecule type" value="Genomic_DNA"/>
</dbReference>
<dbReference type="RefSeq" id="WP_000270907.1">
    <property type="nucleotide sequence ID" value="NC_005957.1"/>
</dbReference>
<dbReference type="RefSeq" id="YP_038495.1">
    <property type="nucleotide sequence ID" value="NC_005957.1"/>
</dbReference>
<dbReference type="SMR" id="Q6HD81"/>
<dbReference type="GeneID" id="93006656"/>
<dbReference type="KEGG" id="btk:BT9727_4178"/>
<dbReference type="PATRIC" id="fig|281309.8.peg.4456"/>
<dbReference type="HOGENOM" id="CLU_061463_3_2_9"/>
<dbReference type="PRO" id="PR:Q6HD81"/>
<dbReference type="Proteomes" id="UP000001301">
    <property type="component" value="Chromosome"/>
</dbReference>
<dbReference type="GO" id="GO:0005737">
    <property type="term" value="C:cytoplasm"/>
    <property type="evidence" value="ECO:0007669"/>
    <property type="project" value="UniProtKB-ARBA"/>
</dbReference>
<dbReference type="GO" id="GO:1990904">
    <property type="term" value="C:ribonucleoprotein complex"/>
    <property type="evidence" value="ECO:0007669"/>
    <property type="project" value="UniProtKB-KW"/>
</dbReference>
<dbReference type="GO" id="GO:0005840">
    <property type="term" value="C:ribosome"/>
    <property type="evidence" value="ECO:0007669"/>
    <property type="project" value="UniProtKB-KW"/>
</dbReference>
<dbReference type="GO" id="GO:0019843">
    <property type="term" value="F:rRNA binding"/>
    <property type="evidence" value="ECO:0007669"/>
    <property type="project" value="UniProtKB-UniRule"/>
</dbReference>
<dbReference type="GO" id="GO:0003735">
    <property type="term" value="F:structural constituent of ribosome"/>
    <property type="evidence" value="ECO:0007669"/>
    <property type="project" value="InterPro"/>
</dbReference>
<dbReference type="GO" id="GO:0006412">
    <property type="term" value="P:translation"/>
    <property type="evidence" value="ECO:0007669"/>
    <property type="project" value="UniProtKB-UniRule"/>
</dbReference>
<dbReference type="HAMAP" id="MF_01363">
    <property type="entry name" value="Ribosomal_bL21"/>
    <property type="match status" value="1"/>
</dbReference>
<dbReference type="InterPro" id="IPR028909">
    <property type="entry name" value="bL21-like"/>
</dbReference>
<dbReference type="InterPro" id="IPR036164">
    <property type="entry name" value="bL21-like_sf"/>
</dbReference>
<dbReference type="InterPro" id="IPR001787">
    <property type="entry name" value="Ribosomal_bL21"/>
</dbReference>
<dbReference type="InterPro" id="IPR018258">
    <property type="entry name" value="Ribosomal_bL21_CS"/>
</dbReference>
<dbReference type="NCBIfam" id="TIGR00061">
    <property type="entry name" value="L21"/>
    <property type="match status" value="1"/>
</dbReference>
<dbReference type="PANTHER" id="PTHR21349">
    <property type="entry name" value="50S RIBOSOMAL PROTEIN L21"/>
    <property type="match status" value="1"/>
</dbReference>
<dbReference type="PANTHER" id="PTHR21349:SF0">
    <property type="entry name" value="LARGE RIBOSOMAL SUBUNIT PROTEIN BL21M"/>
    <property type="match status" value="1"/>
</dbReference>
<dbReference type="Pfam" id="PF00829">
    <property type="entry name" value="Ribosomal_L21p"/>
    <property type="match status" value="1"/>
</dbReference>
<dbReference type="SUPFAM" id="SSF141091">
    <property type="entry name" value="L21p-like"/>
    <property type="match status" value="1"/>
</dbReference>
<dbReference type="PROSITE" id="PS01169">
    <property type="entry name" value="RIBOSOMAL_L21"/>
    <property type="match status" value="1"/>
</dbReference>
<comment type="function">
    <text evidence="1">This protein binds to 23S rRNA in the presence of protein L20.</text>
</comment>
<comment type="subunit">
    <text evidence="1">Part of the 50S ribosomal subunit. Contacts protein L20.</text>
</comment>
<comment type="similarity">
    <text evidence="1">Belongs to the bacterial ribosomal protein bL21 family.</text>
</comment>
<protein>
    <recommendedName>
        <fullName evidence="1">Large ribosomal subunit protein bL21</fullName>
    </recommendedName>
    <alternativeName>
        <fullName evidence="2">50S ribosomal protein L21</fullName>
    </alternativeName>
</protein>
<proteinExistence type="inferred from homology"/>
<keyword id="KW-0687">Ribonucleoprotein</keyword>
<keyword id="KW-0689">Ribosomal protein</keyword>
<keyword id="KW-0694">RNA-binding</keyword>
<keyword id="KW-0699">rRNA-binding</keyword>
<organism>
    <name type="scientific">Bacillus thuringiensis subsp. konkukian (strain 97-27)</name>
    <dbReference type="NCBI Taxonomy" id="281309"/>
    <lineage>
        <taxon>Bacteria</taxon>
        <taxon>Bacillati</taxon>
        <taxon>Bacillota</taxon>
        <taxon>Bacilli</taxon>
        <taxon>Bacillales</taxon>
        <taxon>Bacillaceae</taxon>
        <taxon>Bacillus</taxon>
        <taxon>Bacillus cereus group</taxon>
    </lineage>
</organism>
<evidence type="ECO:0000255" key="1">
    <source>
        <dbReference type="HAMAP-Rule" id="MF_01363"/>
    </source>
</evidence>
<evidence type="ECO:0000305" key="2"/>
<feature type="chain" id="PRO_0000269282" description="Large ribosomal subunit protein bL21">
    <location>
        <begin position="1"/>
        <end position="102"/>
    </location>
</feature>